<sequence>MAGHLVNYGKHRTRRSYARIKEVLDLPNLIKIQTNSYQWFLDEGLKEMFDDIMPIDDFQGKLSLEFVGYQLLEPKYTVEEARQHDANYSAPLHVTLRLTNHETGEIKSQDVFFGDFPLMTKQGTFIINGAERVIVSQLVRSPGVYFHSETDKNSRVTYGTTVIPNRGAWLEYETDAKDIAYVRIDRTRKIPLTELVRALGFGSDQDIINMFGDNDSLMLTLEKDVHKNTDDSRTDEALKDIYERLRPGEPKTADSSRSLLYARFFDPKRYDLASVGRYKVNKKLSLKTRLLNQVLAETLADPDTGEVIAQKGTKVDRQVMDKLAPYLDRDDFKTITYQPSDQGVVTDPIELQSIKVYSQVTPDKEINLIGNGHIGKKVKHIVPADVLASMNYFLNLQEGLGSIDDIDHLGNRRIRSVGELLQNQFRIGLSRMERVVRERMSIQDTATVTPQQLINIRPVVASIKEFFGSSQLSQFMDQTNPLGELTHKRRLSALGPGGLTRDRAGYEVRDVHYTHYGRMCPIETPEGPNIGLINSLASYAVVNPYGFIETPYRRVSWDTHKVTDKIDYLTADEEDNYIVAQANSPLNDDGSFVDETVLARHKDNNIEISPDKVDYMDVSPKQVVAVATACIPFLENDDSNRALMGANMQRQAVPLVNPHAPLVGTGMEYKAAHDSGTAVLANNAGTVEYVDAKQIRVRREDGALDAYNLMKFKRSNAGKNYNQRPIVTIGDHVDVDEIIADGPAMQNGELALGQNPIIAFMTWNMYNYEDAIVLSERLVKDDVYTSIHIEEYESEARDTKLGPEEVTREIPNVGEEALKDLDEFGVVRVGAEVRDGDILVGKVTPKGVTELSAEERLLHAIFGEKAREVRDTSLRVPHGGGGIIQDVKIFTREAGDELSPGVNMMVRVYITQKRKIQVGDKMAGRHGNKGTVSVVVPEEDMPYLPDGTPVDICLSPMGVPSRMNIGQVLELHLGMAARNLGIHVATPVFDGANDKDLWATVKEAGMASDGKSVLYDGRTGEPFENRVSVGIMYYMKLSHMVDDKIHARSIGPYSLVTQQPLGGKAQFGGQRFGEMEVWALEAYGAAYTLQEILTYKSDDVVGRVKTYEAIVKGEPIPKPGVPESFRVLVKELQALGLDMKVLGADKKEIELRDMDDDEDDIVSVDALAKFAAQQEEKKAHEAAAQATDGKSANSTDDKK</sequence>
<dbReference type="EC" id="2.7.7.6" evidence="1"/>
<dbReference type="EMBL" id="FM177140">
    <property type="protein sequence ID" value="CAQ67747.1"/>
    <property type="molecule type" value="Genomic_DNA"/>
</dbReference>
<dbReference type="SMR" id="B3WAM8"/>
<dbReference type="KEGG" id="lcb:LCABL_26820"/>
<dbReference type="HOGENOM" id="CLU_000524_4_1_9"/>
<dbReference type="GO" id="GO:0000428">
    <property type="term" value="C:DNA-directed RNA polymerase complex"/>
    <property type="evidence" value="ECO:0007669"/>
    <property type="project" value="UniProtKB-KW"/>
</dbReference>
<dbReference type="GO" id="GO:0003677">
    <property type="term" value="F:DNA binding"/>
    <property type="evidence" value="ECO:0007669"/>
    <property type="project" value="UniProtKB-UniRule"/>
</dbReference>
<dbReference type="GO" id="GO:0003899">
    <property type="term" value="F:DNA-directed RNA polymerase activity"/>
    <property type="evidence" value="ECO:0007669"/>
    <property type="project" value="UniProtKB-UniRule"/>
</dbReference>
<dbReference type="GO" id="GO:0032549">
    <property type="term" value="F:ribonucleoside binding"/>
    <property type="evidence" value="ECO:0007669"/>
    <property type="project" value="InterPro"/>
</dbReference>
<dbReference type="GO" id="GO:0006351">
    <property type="term" value="P:DNA-templated transcription"/>
    <property type="evidence" value="ECO:0007669"/>
    <property type="project" value="UniProtKB-UniRule"/>
</dbReference>
<dbReference type="CDD" id="cd00653">
    <property type="entry name" value="RNA_pol_B_RPB2"/>
    <property type="match status" value="1"/>
</dbReference>
<dbReference type="FunFam" id="3.90.1800.10:FF:000001">
    <property type="entry name" value="DNA-directed RNA polymerase subunit beta"/>
    <property type="match status" value="1"/>
</dbReference>
<dbReference type="Gene3D" id="2.40.50.100">
    <property type="match status" value="1"/>
</dbReference>
<dbReference type="Gene3D" id="2.40.50.150">
    <property type="match status" value="1"/>
</dbReference>
<dbReference type="Gene3D" id="3.90.1100.10">
    <property type="match status" value="2"/>
</dbReference>
<dbReference type="Gene3D" id="2.30.150.10">
    <property type="entry name" value="DNA-directed RNA polymerase, beta subunit, external 1 domain"/>
    <property type="match status" value="1"/>
</dbReference>
<dbReference type="Gene3D" id="2.40.270.10">
    <property type="entry name" value="DNA-directed RNA polymerase, subunit 2, domain 6"/>
    <property type="match status" value="1"/>
</dbReference>
<dbReference type="Gene3D" id="3.90.1800.10">
    <property type="entry name" value="RNA polymerase alpha subunit dimerisation domain"/>
    <property type="match status" value="1"/>
</dbReference>
<dbReference type="Gene3D" id="3.90.1110.10">
    <property type="entry name" value="RNA polymerase Rpb2, domain 2"/>
    <property type="match status" value="1"/>
</dbReference>
<dbReference type="HAMAP" id="MF_01321">
    <property type="entry name" value="RNApol_bact_RpoB"/>
    <property type="match status" value="1"/>
</dbReference>
<dbReference type="InterPro" id="IPR042107">
    <property type="entry name" value="DNA-dir_RNA_pol_bsu_ext_1_sf"/>
</dbReference>
<dbReference type="InterPro" id="IPR019462">
    <property type="entry name" value="DNA-dir_RNA_pol_bsu_external_1"/>
</dbReference>
<dbReference type="InterPro" id="IPR015712">
    <property type="entry name" value="DNA-dir_RNA_pol_su2"/>
</dbReference>
<dbReference type="InterPro" id="IPR007120">
    <property type="entry name" value="DNA-dir_RNAP_su2_dom"/>
</dbReference>
<dbReference type="InterPro" id="IPR037033">
    <property type="entry name" value="DNA-dir_RNAP_su2_hyb_sf"/>
</dbReference>
<dbReference type="InterPro" id="IPR010243">
    <property type="entry name" value="RNA_pol_bsu_bac"/>
</dbReference>
<dbReference type="InterPro" id="IPR007121">
    <property type="entry name" value="RNA_pol_bsu_CS"/>
</dbReference>
<dbReference type="InterPro" id="IPR007644">
    <property type="entry name" value="RNA_pol_bsu_protrusion"/>
</dbReference>
<dbReference type="InterPro" id="IPR007642">
    <property type="entry name" value="RNA_pol_Rpb2_2"/>
</dbReference>
<dbReference type="InterPro" id="IPR037034">
    <property type="entry name" value="RNA_pol_Rpb2_2_sf"/>
</dbReference>
<dbReference type="InterPro" id="IPR007645">
    <property type="entry name" value="RNA_pol_Rpb2_3"/>
</dbReference>
<dbReference type="InterPro" id="IPR007641">
    <property type="entry name" value="RNA_pol_Rpb2_7"/>
</dbReference>
<dbReference type="InterPro" id="IPR014724">
    <property type="entry name" value="RNA_pol_RPB2_OB-fold"/>
</dbReference>
<dbReference type="NCBIfam" id="NF001616">
    <property type="entry name" value="PRK00405.1"/>
    <property type="match status" value="1"/>
</dbReference>
<dbReference type="NCBIfam" id="TIGR02013">
    <property type="entry name" value="rpoB"/>
    <property type="match status" value="1"/>
</dbReference>
<dbReference type="PANTHER" id="PTHR20856">
    <property type="entry name" value="DNA-DIRECTED RNA POLYMERASE I SUBUNIT 2"/>
    <property type="match status" value="1"/>
</dbReference>
<dbReference type="Pfam" id="PF04563">
    <property type="entry name" value="RNA_pol_Rpb2_1"/>
    <property type="match status" value="1"/>
</dbReference>
<dbReference type="Pfam" id="PF04561">
    <property type="entry name" value="RNA_pol_Rpb2_2"/>
    <property type="match status" value="2"/>
</dbReference>
<dbReference type="Pfam" id="PF04565">
    <property type="entry name" value="RNA_pol_Rpb2_3"/>
    <property type="match status" value="1"/>
</dbReference>
<dbReference type="Pfam" id="PF10385">
    <property type="entry name" value="RNA_pol_Rpb2_45"/>
    <property type="match status" value="1"/>
</dbReference>
<dbReference type="Pfam" id="PF00562">
    <property type="entry name" value="RNA_pol_Rpb2_6"/>
    <property type="match status" value="1"/>
</dbReference>
<dbReference type="Pfam" id="PF04560">
    <property type="entry name" value="RNA_pol_Rpb2_7"/>
    <property type="match status" value="1"/>
</dbReference>
<dbReference type="SUPFAM" id="SSF64484">
    <property type="entry name" value="beta and beta-prime subunits of DNA dependent RNA-polymerase"/>
    <property type="match status" value="1"/>
</dbReference>
<dbReference type="PROSITE" id="PS01166">
    <property type="entry name" value="RNA_POL_BETA"/>
    <property type="match status" value="1"/>
</dbReference>
<feature type="chain" id="PRO_1000141704" description="DNA-directed RNA polymerase subunit beta">
    <location>
        <begin position="1"/>
        <end position="1199"/>
    </location>
</feature>
<feature type="region of interest" description="Disordered" evidence="2">
    <location>
        <begin position="1175"/>
        <end position="1199"/>
    </location>
</feature>
<feature type="compositionally biased region" description="Polar residues" evidence="2">
    <location>
        <begin position="1188"/>
        <end position="1199"/>
    </location>
</feature>
<evidence type="ECO:0000255" key="1">
    <source>
        <dbReference type="HAMAP-Rule" id="MF_01321"/>
    </source>
</evidence>
<evidence type="ECO:0000256" key="2">
    <source>
        <dbReference type="SAM" id="MobiDB-lite"/>
    </source>
</evidence>
<proteinExistence type="inferred from homology"/>
<name>RPOB_LACCB</name>
<comment type="function">
    <text evidence="1">DNA-dependent RNA polymerase catalyzes the transcription of DNA into RNA using the four ribonucleoside triphosphates as substrates.</text>
</comment>
<comment type="catalytic activity">
    <reaction evidence="1">
        <text>RNA(n) + a ribonucleoside 5'-triphosphate = RNA(n+1) + diphosphate</text>
        <dbReference type="Rhea" id="RHEA:21248"/>
        <dbReference type="Rhea" id="RHEA-COMP:14527"/>
        <dbReference type="Rhea" id="RHEA-COMP:17342"/>
        <dbReference type="ChEBI" id="CHEBI:33019"/>
        <dbReference type="ChEBI" id="CHEBI:61557"/>
        <dbReference type="ChEBI" id="CHEBI:140395"/>
        <dbReference type="EC" id="2.7.7.6"/>
    </reaction>
</comment>
<comment type="subunit">
    <text evidence="1">The RNAP catalytic core consists of 2 alpha, 1 beta, 1 beta' and 1 omega subunit. When a sigma factor is associated with the core the holoenzyme is formed, which can initiate transcription.</text>
</comment>
<comment type="similarity">
    <text evidence="1">Belongs to the RNA polymerase beta chain family.</text>
</comment>
<reference key="1">
    <citation type="submission" date="2008-06" db="EMBL/GenBank/DDBJ databases">
        <title>Lactobacillus casei BL23 complete genome sequence.</title>
        <authorList>
            <person name="Maze A."/>
            <person name="Boel G."/>
            <person name="Bourand A."/>
            <person name="Loux V."/>
            <person name="Gibrat J.F."/>
            <person name="Zuniga M."/>
            <person name="Hartke A."/>
            <person name="Deutscher J."/>
        </authorList>
    </citation>
    <scope>NUCLEOTIDE SEQUENCE [LARGE SCALE GENOMIC DNA]</scope>
    <source>
        <strain>BL23</strain>
    </source>
</reference>
<gene>
    <name evidence="1" type="primary">rpoB</name>
    <name type="ordered locus">LCABL_26820</name>
</gene>
<protein>
    <recommendedName>
        <fullName evidence="1">DNA-directed RNA polymerase subunit beta</fullName>
        <shortName evidence="1">RNAP subunit beta</shortName>
        <ecNumber evidence="1">2.7.7.6</ecNumber>
    </recommendedName>
    <alternativeName>
        <fullName evidence="1">RNA polymerase subunit beta</fullName>
    </alternativeName>
    <alternativeName>
        <fullName evidence="1">Transcriptase subunit beta</fullName>
    </alternativeName>
</protein>
<accession>B3WAM8</accession>
<organism>
    <name type="scientific">Lacticaseibacillus casei (strain BL23)</name>
    <name type="common">Lactobacillus casei</name>
    <dbReference type="NCBI Taxonomy" id="543734"/>
    <lineage>
        <taxon>Bacteria</taxon>
        <taxon>Bacillati</taxon>
        <taxon>Bacillota</taxon>
        <taxon>Bacilli</taxon>
        <taxon>Lactobacillales</taxon>
        <taxon>Lactobacillaceae</taxon>
        <taxon>Lacticaseibacillus</taxon>
    </lineage>
</organism>
<keyword id="KW-0240">DNA-directed RNA polymerase</keyword>
<keyword id="KW-0548">Nucleotidyltransferase</keyword>
<keyword id="KW-0804">Transcription</keyword>
<keyword id="KW-0808">Transferase</keyword>